<sequence>MLVVEGLTCRFGAKAAVDDASFQISPGGFVGVIGRSGAGKSTLLRTINRLVTPTQGRILFDGTDVTALRGKELRQWRARSAMIFQQFNLVGRLDVLTNVLMGRLATMPAWRSLSQTWPEHDKALAMSALEQFDIAALAAQRADQLSGGQQQRVAIARALVQQPDIILADEPIASLDPRNTKIVMDALLRINKHFGITVLCNLHSLDLARSYCDRLIGMAQGRVVFDGAPSALTDHVARELYDLEATDVMGGSPVPAPEGIPALGTAAAA</sequence>
<reference key="1">
    <citation type="journal article" date="2002" name="DNA Res.">
        <title>Complete genomic sequence of nitrogen-fixing symbiotic bacterium Bradyrhizobium japonicum USDA110.</title>
        <authorList>
            <person name="Kaneko T."/>
            <person name="Nakamura Y."/>
            <person name="Sato S."/>
            <person name="Minamisawa K."/>
            <person name="Uchiumi T."/>
            <person name="Sasamoto S."/>
            <person name="Watanabe A."/>
            <person name="Idesawa K."/>
            <person name="Iriguchi M."/>
            <person name="Kawashima K."/>
            <person name="Kohara M."/>
            <person name="Matsumoto M."/>
            <person name="Shimpo S."/>
            <person name="Tsuruoka H."/>
            <person name="Wada T."/>
            <person name="Yamada M."/>
            <person name="Tabata S."/>
        </authorList>
    </citation>
    <scope>NUCLEOTIDE SEQUENCE [LARGE SCALE GENOMIC DNA]</scope>
    <source>
        <strain>JCM 10833 / BCRC 13528 / IAM 13628 / NBRC 14792 / USDA 110</strain>
    </source>
</reference>
<protein>
    <recommendedName>
        <fullName evidence="1">Phosphonates import ATP-binding protein PhnC</fullName>
        <ecNumber evidence="1">7.3.2.2</ecNumber>
    </recommendedName>
</protein>
<dbReference type="EC" id="7.3.2.2" evidence="1"/>
<dbReference type="EMBL" id="BA000040">
    <property type="protein sequence ID" value="BAC53212.1"/>
    <property type="molecule type" value="Genomic_DNA"/>
</dbReference>
<dbReference type="RefSeq" id="NP_774587.1">
    <property type="nucleotide sequence ID" value="NC_004463.1"/>
</dbReference>
<dbReference type="RefSeq" id="WP_011090670.1">
    <property type="nucleotide sequence ID" value="NC_004463.1"/>
</dbReference>
<dbReference type="SMR" id="Q89C51"/>
<dbReference type="FunCoup" id="Q89C51">
    <property type="interactions" value="201"/>
</dbReference>
<dbReference type="STRING" id="224911.AAV28_37455"/>
<dbReference type="EnsemblBacteria" id="BAC53212">
    <property type="protein sequence ID" value="BAC53212"/>
    <property type="gene ID" value="BAC53212"/>
</dbReference>
<dbReference type="GeneID" id="46494879"/>
<dbReference type="KEGG" id="bja:bll7947"/>
<dbReference type="PATRIC" id="fig|224911.44.peg.8097"/>
<dbReference type="eggNOG" id="COG3638">
    <property type="taxonomic scope" value="Bacteria"/>
</dbReference>
<dbReference type="HOGENOM" id="CLU_000604_1_22_5"/>
<dbReference type="InParanoid" id="Q89C51"/>
<dbReference type="OrthoDB" id="9802264at2"/>
<dbReference type="PhylomeDB" id="Q89C51"/>
<dbReference type="Proteomes" id="UP000002526">
    <property type="component" value="Chromosome"/>
</dbReference>
<dbReference type="GO" id="GO:0005886">
    <property type="term" value="C:plasma membrane"/>
    <property type="evidence" value="ECO:0007669"/>
    <property type="project" value="UniProtKB-SubCell"/>
</dbReference>
<dbReference type="GO" id="GO:0015416">
    <property type="term" value="F:ABC-type phosphonate transporter activity"/>
    <property type="evidence" value="ECO:0007669"/>
    <property type="project" value="UniProtKB-EC"/>
</dbReference>
<dbReference type="GO" id="GO:0005524">
    <property type="term" value="F:ATP binding"/>
    <property type="evidence" value="ECO:0007669"/>
    <property type="project" value="UniProtKB-KW"/>
</dbReference>
<dbReference type="GO" id="GO:0016887">
    <property type="term" value="F:ATP hydrolysis activity"/>
    <property type="evidence" value="ECO:0007669"/>
    <property type="project" value="InterPro"/>
</dbReference>
<dbReference type="CDD" id="cd03256">
    <property type="entry name" value="ABC_PhnC_transporter"/>
    <property type="match status" value="1"/>
</dbReference>
<dbReference type="Gene3D" id="3.40.50.300">
    <property type="entry name" value="P-loop containing nucleotide triphosphate hydrolases"/>
    <property type="match status" value="1"/>
</dbReference>
<dbReference type="InterPro" id="IPR003593">
    <property type="entry name" value="AAA+_ATPase"/>
</dbReference>
<dbReference type="InterPro" id="IPR003439">
    <property type="entry name" value="ABC_transporter-like_ATP-bd"/>
</dbReference>
<dbReference type="InterPro" id="IPR017871">
    <property type="entry name" value="ABC_transporter-like_CS"/>
</dbReference>
<dbReference type="InterPro" id="IPR012693">
    <property type="entry name" value="ABC_transpr_PhnC"/>
</dbReference>
<dbReference type="InterPro" id="IPR050086">
    <property type="entry name" value="MetN_ABC_transporter-like"/>
</dbReference>
<dbReference type="InterPro" id="IPR027417">
    <property type="entry name" value="P-loop_NTPase"/>
</dbReference>
<dbReference type="NCBIfam" id="TIGR02315">
    <property type="entry name" value="ABC_phnC"/>
    <property type="match status" value="1"/>
</dbReference>
<dbReference type="PANTHER" id="PTHR43166">
    <property type="entry name" value="AMINO ACID IMPORT ATP-BINDING PROTEIN"/>
    <property type="match status" value="1"/>
</dbReference>
<dbReference type="PANTHER" id="PTHR43166:SF6">
    <property type="entry name" value="PHOSPHONATES IMPORT ATP-BINDING PROTEIN PHNC"/>
    <property type="match status" value="1"/>
</dbReference>
<dbReference type="Pfam" id="PF00005">
    <property type="entry name" value="ABC_tran"/>
    <property type="match status" value="1"/>
</dbReference>
<dbReference type="SMART" id="SM00382">
    <property type="entry name" value="AAA"/>
    <property type="match status" value="1"/>
</dbReference>
<dbReference type="SUPFAM" id="SSF52540">
    <property type="entry name" value="P-loop containing nucleoside triphosphate hydrolases"/>
    <property type="match status" value="1"/>
</dbReference>
<dbReference type="PROSITE" id="PS00211">
    <property type="entry name" value="ABC_TRANSPORTER_1"/>
    <property type="match status" value="1"/>
</dbReference>
<dbReference type="PROSITE" id="PS50893">
    <property type="entry name" value="ABC_TRANSPORTER_2"/>
    <property type="match status" value="1"/>
</dbReference>
<dbReference type="PROSITE" id="PS51249">
    <property type="entry name" value="PHNC"/>
    <property type="match status" value="1"/>
</dbReference>
<gene>
    <name evidence="1" type="primary">phnC</name>
    <name type="ordered locus">bll7947</name>
</gene>
<evidence type="ECO:0000255" key="1">
    <source>
        <dbReference type="HAMAP-Rule" id="MF_01713"/>
    </source>
</evidence>
<organism>
    <name type="scientific">Bradyrhizobium diazoefficiens (strain JCM 10833 / BCRC 13528 / IAM 13628 / NBRC 14792 / USDA 110)</name>
    <dbReference type="NCBI Taxonomy" id="224911"/>
    <lineage>
        <taxon>Bacteria</taxon>
        <taxon>Pseudomonadati</taxon>
        <taxon>Pseudomonadota</taxon>
        <taxon>Alphaproteobacteria</taxon>
        <taxon>Hyphomicrobiales</taxon>
        <taxon>Nitrobacteraceae</taxon>
        <taxon>Bradyrhizobium</taxon>
    </lineage>
</organism>
<accession>Q89C51</accession>
<feature type="chain" id="PRO_0000092700" description="Phosphonates import ATP-binding protein PhnC">
    <location>
        <begin position="1"/>
        <end position="269"/>
    </location>
</feature>
<feature type="domain" description="ABC transporter" evidence="1">
    <location>
        <begin position="2"/>
        <end position="245"/>
    </location>
</feature>
<feature type="binding site" evidence="1">
    <location>
        <begin position="34"/>
        <end position="41"/>
    </location>
    <ligand>
        <name>ATP</name>
        <dbReference type="ChEBI" id="CHEBI:30616"/>
    </ligand>
</feature>
<comment type="function">
    <text evidence="1">Part of the ABC transporter complex PhnCDE involved in phosphonates import. Responsible for energy coupling to the transport system.</text>
</comment>
<comment type="catalytic activity">
    <reaction evidence="1">
        <text>phosphonate(out) + ATP + H2O = phosphonate(in) + ADP + phosphate + H(+)</text>
        <dbReference type="Rhea" id="RHEA:18065"/>
        <dbReference type="ChEBI" id="CHEBI:15377"/>
        <dbReference type="ChEBI" id="CHEBI:15378"/>
        <dbReference type="ChEBI" id="CHEBI:16215"/>
        <dbReference type="ChEBI" id="CHEBI:30616"/>
        <dbReference type="ChEBI" id="CHEBI:43474"/>
        <dbReference type="ChEBI" id="CHEBI:456216"/>
        <dbReference type="EC" id="7.3.2.2"/>
    </reaction>
</comment>
<comment type="subunit">
    <text evidence="1">The complex is composed of two ATP-binding proteins (PhnC), two transmembrane proteins (PhnE) and a solute-binding protein (PhnD).</text>
</comment>
<comment type="subcellular location">
    <subcellularLocation>
        <location evidence="1">Cell inner membrane</location>
        <topology evidence="1">Peripheral membrane protein</topology>
    </subcellularLocation>
</comment>
<comment type="similarity">
    <text evidence="1">Belongs to the ABC transporter superfamily. Phosphonates importer (TC 3.A.1.9.1) family.</text>
</comment>
<name>PHNC_BRADU</name>
<keyword id="KW-0067">ATP-binding</keyword>
<keyword id="KW-0997">Cell inner membrane</keyword>
<keyword id="KW-1003">Cell membrane</keyword>
<keyword id="KW-0472">Membrane</keyword>
<keyword id="KW-0547">Nucleotide-binding</keyword>
<keyword id="KW-0918">Phosphonate transport</keyword>
<keyword id="KW-1185">Reference proteome</keyword>
<keyword id="KW-1278">Translocase</keyword>
<keyword id="KW-0813">Transport</keyword>
<proteinExistence type="inferred from homology"/>